<name>Y4555_XANOP</name>
<keyword id="KW-0997">Cell inner membrane</keyword>
<keyword id="KW-1003">Cell membrane</keyword>
<keyword id="KW-0472">Membrane</keyword>
<keyword id="KW-0812">Transmembrane</keyword>
<keyword id="KW-1133">Transmembrane helix</keyword>
<sequence>MSRVKKLHQWKERLRDRARTVSFGRFLWRRFLDDRLFQAAASLAYTTVFALVPLAIVVFGVLSAFPAFNEWKDALTDFIFTNFVPGAARSVQNYLNRSLEDLGKFTVAGMVALVASLLITLHSIEQTFNSIWRVAAARPKVTRFLIYWTVLTLGTMLAAASMAMAAYVFALPLFRTTEGQWLAEFAWRLAPMAVEFICIVLIYRVVPQHVVRLRHALPGALLAVILMEIVKWGFGVYLGNFQTYQRIYGALSALPILLLWIYLSWVSVLLGASLASSMAAFRYQPEAMRLPTGFEIYGLLRLLGRFRQARIHGEGLDEDRILALEPMLTDTLMQELLCELKRMRLLRRDERGQWLLARDLDLVPLAELYENCQLRVPIEDRPLPCRDDAYGQAAAAALEQLRQPLRSVLAQPVGDLYTHLPGDPP</sequence>
<organism>
    <name type="scientific">Xanthomonas oryzae pv. oryzae (strain PXO99A)</name>
    <dbReference type="NCBI Taxonomy" id="360094"/>
    <lineage>
        <taxon>Bacteria</taxon>
        <taxon>Pseudomonadati</taxon>
        <taxon>Pseudomonadota</taxon>
        <taxon>Gammaproteobacteria</taxon>
        <taxon>Lysobacterales</taxon>
        <taxon>Lysobacteraceae</taxon>
        <taxon>Xanthomonas</taxon>
    </lineage>
</organism>
<gene>
    <name type="ordered locus">PXO_04555</name>
</gene>
<protein>
    <recommendedName>
        <fullName evidence="1">UPF0761 membrane protein PXO_04555</fullName>
    </recommendedName>
</protein>
<reference key="1">
    <citation type="journal article" date="2008" name="BMC Genomics">
        <title>Genome sequence and rapid evolution of the rice pathogen Xanthomonas oryzae pv. oryzae PXO99A.</title>
        <authorList>
            <person name="Salzberg S.L."/>
            <person name="Sommer D.D."/>
            <person name="Schatz M.C."/>
            <person name="Phillippy A.M."/>
            <person name="Rabinowicz P.D."/>
            <person name="Tsuge S."/>
            <person name="Furutani A."/>
            <person name="Ochiai H."/>
            <person name="Delcher A.L."/>
            <person name="Kelley D."/>
            <person name="Madupu R."/>
            <person name="Puiu D."/>
            <person name="Radune D."/>
            <person name="Shumway M."/>
            <person name="Trapnell C."/>
            <person name="Aparna G."/>
            <person name="Jha G."/>
            <person name="Pandey A."/>
            <person name="Patil P.B."/>
            <person name="Ishihara H."/>
            <person name="Meyer D.F."/>
            <person name="Szurek B."/>
            <person name="Verdier V."/>
            <person name="Koebnik R."/>
            <person name="Dow J.M."/>
            <person name="Ryan R.P."/>
            <person name="Hirata H."/>
            <person name="Tsuyumu S."/>
            <person name="Won Lee S."/>
            <person name="Seo Y.-S."/>
            <person name="Sriariyanum M."/>
            <person name="Ronald P.C."/>
            <person name="Sonti R.V."/>
            <person name="Van Sluys M.-A."/>
            <person name="Leach J.E."/>
            <person name="White F.F."/>
            <person name="Bogdanove A.J."/>
        </authorList>
    </citation>
    <scope>NUCLEOTIDE SEQUENCE [LARGE SCALE GENOMIC DNA]</scope>
    <source>
        <strain>PXO99A</strain>
    </source>
</reference>
<evidence type="ECO:0000255" key="1">
    <source>
        <dbReference type="HAMAP-Rule" id="MF_00672"/>
    </source>
</evidence>
<comment type="subcellular location">
    <subcellularLocation>
        <location evidence="1">Cell inner membrane</location>
        <topology evidence="1">Multi-pass membrane protein</topology>
    </subcellularLocation>
</comment>
<comment type="similarity">
    <text evidence="1">Belongs to the UPF0761 family.</text>
</comment>
<accession>B2SQM8</accession>
<feature type="chain" id="PRO_1000131571" description="UPF0761 membrane protein PXO_04555">
    <location>
        <begin position="1"/>
        <end position="425"/>
    </location>
</feature>
<feature type="transmembrane region" description="Helical" evidence="1">
    <location>
        <begin position="48"/>
        <end position="68"/>
    </location>
</feature>
<feature type="transmembrane region" description="Helical" evidence="1">
    <location>
        <begin position="105"/>
        <end position="125"/>
    </location>
</feature>
<feature type="transmembrane region" description="Helical" evidence="1">
    <location>
        <begin position="154"/>
        <end position="174"/>
    </location>
</feature>
<feature type="transmembrane region" description="Helical" evidence="1">
    <location>
        <begin position="182"/>
        <end position="202"/>
    </location>
</feature>
<feature type="transmembrane region" description="Helical" evidence="1">
    <location>
        <begin position="219"/>
        <end position="239"/>
    </location>
</feature>
<feature type="transmembrane region" description="Helical" evidence="1">
    <location>
        <begin position="250"/>
        <end position="270"/>
    </location>
</feature>
<proteinExistence type="inferred from homology"/>
<dbReference type="EMBL" id="CP000967">
    <property type="protein sequence ID" value="ACD57855.1"/>
    <property type="molecule type" value="Genomic_DNA"/>
</dbReference>
<dbReference type="RefSeq" id="WP_011260056.1">
    <property type="nucleotide sequence ID" value="NC_010717.2"/>
</dbReference>
<dbReference type="SMR" id="B2SQM8"/>
<dbReference type="KEGG" id="xop:PXO_04555"/>
<dbReference type="eggNOG" id="COG1295">
    <property type="taxonomic scope" value="Bacteria"/>
</dbReference>
<dbReference type="HOGENOM" id="CLU_032288_1_0_6"/>
<dbReference type="Proteomes" id="UP000001740">
    <property type="component" value="Chromosome"/>
</dbReference>
<dbReference type="GO" id="GO:0005886">
    <property type="term" value="C:plasma membrane"/>
    <property type="evidence" value="ECO:0007669"/>
    <property type="project" value="UniProtKB-SubCell"/>
</dbReference>
<dbReference type="HAMAP" id="MF_00672">
    <property type="entry name" value="UPF0761"/>
    <property type="match status" value="1"/>
</dbReference>
<dbReference type="InterPro" id="IPR023679">
    <property type="entry name" value="UPF0761_bac"/>
</dbReference>
<dbReference type="InterPro" id="IPR017039">
    <property type="entry name" value="Virul_fac_BrkB"/>
</dbReference>
<dbReference type="NCBIfam" id="NF003256">
    <property type="entry name" value="PRK04214.1"/>
    <property type="match status" value="1"/>
</dbReference>
<dbReference type="NCBIfam" id="TIGR00765">
    <property type="entry name" value="yihY_not_rbn"/>
    <property type="match status" value="1"/>
</dbReference>
<dbReference type="PANTHER" id="PTHR30213">
    <property type="entry name" value="INNER MEMBRANE PROTEIN YHJD"/>
    <property type="match status" value="1"/>
</dbReference>
<dbReference type="PANTHER" id="PTHR30213:SF0">
    <property type="entry name" value="UPF0761 MEMBRANE PROTEIN YIHY"/>
    <property type="match status" value="1"/>
</dbReference>
<dbReference type="Pfam" id="PF03631">
    <property type="entry name" value="Virul_fac_BrkB"/>
    <property type="match status" value="1"/>
</dbReference>